<proteinExistence type="inferred from homology"/>
<feature type="chain" id="PRO_0000372732" description="UPF0741 protein BCQ_5224">
    <location>
        <begin position="1"/>
        <end position="74"/>
    </location>
</feature>
<evidence type="ECO:0000255" key="1">
    <source>
        <dbReference type="HAMAP-Rule" id="MF_01863"/>
    </source>
</evidence>
<protein>
    <recommendedName>
        <fullName evidence="1">UPF0741 protein BCQ_5224</fullName>
    </recommendedName>
</protein>
<gene>
    <name type="ordered locus">BCQ_5224</name>
</gene>
<name>Y5224_BACCQ</name>
<comment type="similarity">
    <text evidence="1">Belongs to the UPF0741 family.</text>
</comment>
<dbReference type="EMBL" id="CP000227">
    <property type="protein sequence ID" value="ACM15624.1"/>
    <property type="molecule type" value="Genomic_DNA"/>
</dbReference>
<dbReference type="SMR" id="B9IS16"/>
<dbReference type="KEGG" id="bcq:BCQ_5224"/>
<dbReference type="HOGENOM" id="CLU_163820_1_0_9"/>
<dbReference type="Proteomes" id="UP000000441">
    <property type="component" value="Chromosome"/>
</dbReference>
<dbReference type="HAMAP" id="MF_01863">
    <property type="entry name" value="UPF0741"/>
    <property type="match status" value="1"/>
</dbReference>
<dbReference type="InterPro" id="IPR009910">
    <property type="entry name" value="DUF1450"/>
</dbReference>
<dbReference type="InterPro" id="IPR020880">
    <property type="entry name" value="UPF0741"/>
</dbReference>
<dbReference type="Pfam" id="PF07293">
    <property type="entry name" value="DUF1450"/>
    <property type="match status" value="1"/>
</dbReference>
<reference key="1">
    <citation type="journal article" date="2009" name="J. Bacteriol.">
        <title>Complete genome sequence of the extremophilic Bacillus cereus strain Q1 with industrial applications.</title>
        <authorList>
            <person name="Xiong Z."/>
            <person name="Jiang Y."/>
            <person name="Qi D."/>
            <person name="Lu H."/>
            <person name="Yang F."/>
            <person name="Yang J."/>
            <person name="Chen L."/>
            <person name="Sun L."/>
            <person name="Xu X."/>
            <person name="Xue Y."/>
            <person name="Zhu Y."/>
            <person name="Jin Q."/>
        </authorList>
    </citation>
    <scope>NUCLEOTIDE SEQUENCE [LARGE SCALE GENOMIC DNA]</scope>
    <source>
        <strain>Q1</strain>
    </source>
</reference>
<sequence length="74" mass="8132">MGNEFRVCDDCQATNVKTLIPKLKKVDSCATIEVGCQSYCGPGRKKSFAFVNNRPVAAPTEDELIVKIEAKLNK</sequence>
<organism>
    <name type="scientific">Bacillus cereus (strain Q1)</name>
    <dbReference type="NCBI Taxonomy" id="361100"/>
    <lineage>
        <taxon>Bacteria</taxon>
        <taxon>Bacillati</taxon>
        <taxon>Bacillota</taxon>
        <taxon>Bacilli</taxon>
        <taxon>Bacillales</taxon>
        <taxon>Bacillaceae</taxon>
        <taxon>Bacillus</taxon>
        <taxon>Bacillus cereus group</taxon>
    </lineage>
</organism>
<accession>B9IS16</accession>